<reference key="1">
    <citation type="journal article" date="2009" name="J. Biol. Chem.">
        <title>RamA, a protein required for reductive activation of corrinoid-dependent methylamine methyltransferase reactions in methanogenic archaea.</title>
        <authorList>
            <person name="Ferguson T."/>
            <person name="Soares J.A."/>
            <person name="Lienard T."/>
            <person name="Gottschalk G."/>
            <person name="Krzycki J.A."/>
        </authorList>
    </citation>
    <scope>NUCLEOTIDE SEQUENCE [GENOMIC DNA]</scope>
    <scope>PROTEIN SEQUENCE OF 1-40</scope>
    <scope>IDENTIFICATION BY MASS SPECTROMETRY</scope>
    <scope>FUNCTION</scope>
    <scope>CATALYTIC ACTIVITY</scope>
    <scope>COFACTOR</scope>
    <scope>PATHWAY</scope>
    <scope>SUBUNIT</scope>
    <source>
        <strain>ATCC 43569 / MS / DSM 800 / JCM 10043 / NBRC 100474</strain>
    </source>
</reference>
<dbReference type="EC" id="1.16.99.1" evidence="2"/>
<dbReference type="EMBL" id="FJ477063">
    <property type="protein sequence ID" value="ACL01114.1"/>
    <property type="molecule type" value="Genomic_DNA"/>
</dbReference>
<dbReference type="SMR" id="B8Y445"/>
<dbReference type="BioCyc" id="MetaCyc:MONOMER-17053"/>
<dbReference type="UniPathway" id="UPA00643"/>
<dbReference type="UniPathway" id="UPA00644"/>
<dbReference type="UniPathway" id="UPA00645"/>
<dbReference type="GO" id="GO:0051539">
    <property type="term" value="F:4 iron, 4 sulfur cluster binding"/>
    <property type="evidence" value="ECO:0007669"/>
    <property type="project" value="UniProtKB-KW"/>
</dbReference>
<dbReference type="GO" id="GO:0046872">
    <property type="term" value="F:metal ion binding"/>
    <property type="evidence" value="ECO:0007669"/>
    <property type="project" value="UniProtKB-KW"/>
</dbReference>
<dbReference type="GO" id="GO:0016491">
    <property type="term" value="F:oxidoreductase activity"/>
    <property type="evidence" value="ECO:0007669"/>
    <property type="project" value="UniProtKB-KW"/>
</dbReference>
<dbReference type="GO" id="GO:0015948">
    <property type="term" value="P:methanogenesis"/>
    <property type="evidence" value="ECO:0007669"/>
    <property type="project" value="UniProtKB-KW"/>
</dbReference>
<dbReference type="Gene3D" id="3.30.70.20">
    <property type="match status" value="1"/>
</dbReference>
<dbReference type="Gene3D" id="3.30.420.480">
    <property type="entry name" value="Domain of unknown function (DUF4445)"/>
    <property type="match status" value="1"/>
</dbReference>
<dbReference type="InterPro" id="IPR017896">
    <property type="entry name" value="4Fe4S_Fe-S-bd"/>
</dbReference>
<dbReference type="InterPro" id="IPR017900">
    <property type="entry name" value="4Fe4S_Fe_S_CS"/>
</dbReference>
<dbReference type="InterPro" id="IPR052911">
    <property type="entry name" value="Corrinoid_activation_enz"/>
</dbReference>
<dbReference type="InterPro" id="IPR041414">
    <property type="entry name" value="Raco-like_middle"/>
</dbReference>
<dbReference type="InterPro" id="IPR042259">
    <property type="entry name" value="Raco-like_middle_sf"/>
</dbReference>
<dbReference type="InterPro" id="IPR027980">
    <property type="entry name" value="RACo_C"/>
</dbReference>
<dbReference type="InterPro" id="IPR026339">
    <property type="entry name" value="RamA_corrin_act"/>
</dbReference>
<dbReference type="NCBIfam" id="TIGR04270">
    <property type="entry name" value="Rama_corrin_act"/>
    <property type="match status" value="1"/>
</dbReference>
<dbReference type="PANTHER" id="PTHR42895:SF2">
    <property type="entry name" value="IRON-SULFUR CLUSTER PROTEIN"/>
    <property type="match status" value="1"/>
</dbReference>
<dbReference type="PANTHER" id="PTHR42895">
    <property type="entry name" value="IRON-SULFUR CLUSTER-BINDING PROTEIN-RELATED"/>
    <property type="match status" value="1"/>
</dbReference>
<dbReference type="Pfam" id="PF14697">
    <property type="entry name" value="Fer4_21"/>
    <property type="match status" value="1"/>
</dbReference>
<dbReference type="Pfam" id="PF14574">
    <property type="entry name" value="RACo_C_ter"/>
    <property type="match status" value="1"/>
</dbReference>
<dbReference type="Pfam" id="PF17651">
    <property type="entry name" value="Raco_middle"/>
    <property type="match status" value="1"/>
</dbReference>
<dbReference type="SUPFAM" id="SSF54862">
    <property type="entry name" value="4Fe-4S ferredoxins"/>
    <property type="match status" value="1"/>
</dbReference>
<dbReference type="PROSITE" id="PS00198">
    <property type="entry name" value="4FE4S_FER_1"/>
    <property type="match status" value="1"/>
</dbReference>
<dbReference type="PROSITE" id="PS51379">
    <property type="entry name" value="4FE4S_FER_2"/>
    <property type="match status" value="2"/>
</dbReference>
<sequence length="540" mass="59084">MYGIALDLGTSGFRTQLIDLETKETLKTVITMGHPLPGGNVMDHLDFAITTGEDVAHEVIIETIRRMFLQFDIDLSRVERLAVCGNPIQLSLFQNTEIRDLAYAGENKQKMLGVRNVKRDARVFPASEIFGEKYLSNCEIIVPPAIKHEIGADALAMMLETDFLIQPEPSLVTDYGTNAEMALKIGDRIITASAAAGPAIEGQGISSGMLASPGAICDVKPEGQYWRIIVLDREMEKQDAYLIDPVKGEIKDSYGFEAVGITGTGVISAFAMALKGGLIEKFPKLPNGKLILGPGIEITEKDVEEAGKAIGAIRAAHMTLIVESGIKYEDLEYAYMSGASGAYVDAEDARRLGAAPGYAKKIVQFGNTSLALARELVLEKSRLDDVIEIAKKITADHLMMATSETFNNFYLCELSYWTQGMPLETYDQMLELYGLPPLPKILEHVTIEKRVSKDIEEVGSGGLSILKEIGIILEVPVEKCVYCKKCVKECPEAALEIVERDGQRIAKYDSQKCLGTSCRRCVGVCPEDAIDITKLKITAK</sequence>
<feature type="chain" id="PRO_0000460048" description="[Co(II) methylated amine-specific corrinoid protein] reductase">
    <location>
        <begin position="1"/>
        <end position="540"/>
    </location>
</feature>
<feature type="domain" description="4Fe-4S ferredoxin-type 1" evidence="1">
    <location>
        <begin position="471"/>
        <end position="500"/>
    </location>
</feature>
<feature type="domain" description="4Fe-4S ferredoxin-type 2" evidence="1">
    <location>
        <begin position="504"/>
        <end position="535"/>
    </location>
</feature>
<feature type="binding site" evidence="1">
    <location>
        <position position="480"/>
    </location>
    <ligand>
        <name>[4Fe-4S] cluster</name>
        <dbReference type="ChEBI" id="CHEBI:49883"/>
        <label>1</label>
    </ligand>
</feature>
<feature type="binding site" evidence="1">
    <location>
        <position position="483"/>
    </location>
    <ligand>
        <name>[4Fe-4S] cluster</name>
        <dbReference type="ChEBI" id="CHEBI:49883"/>
        <label>1</label>
    </ligand>
</feature>
<feature type="binding site" evidence="1">
    <location>
        <position position="486"/>
    </location>
    <ligand>
        <name>[4Fe-4S] cluster</name>
        <dbReference type="ChEBI" id="CHEBI:49883"/>
        <label>1</label>
    </ligand>
</feature>
<feature type="binding site" evidence="1">
    <location>
        <position position="490"/>
    </location>
    <ligand>
        <name>[4Fe-4S] cluster</name>
        <dbReference type="ChEBI" id="CHEBI:49883"/>
        <label>2</label>
    </ligand>
</feature>
<feature type="binding site" evidence="1">
    <location>
        <position position="513"/>
    </location>
    <ligand>
        <name>[4Fe-4S] cluster</name>
        <dbReference type="ChEBI" id="CHEBI:49883"/>
        <label>2</label>
    </ligand>
</feature>
<feature type="binding site" evidence="1">
    <location>
        <position position="518"/>
    </location>
    <ligand>
        <name>[4Fe-4S] cluster</name>
        <dbReference type="ChEBI" id="CHEBI:49883"/>
        <label>2</label>
    </ligand>
</feature>
<feature type="binding site" evidence="1">
    <location>
        <position position="521"/>
    </location>
    <ligand>
        <name>[4Fe-4S] cluster</name>
        <dbReference type="ChEBI" id="CHEBI:49883"/>
        <label>2</label>
    </ligand>
</feature>
<feature type="binding site" evidence="1">
    <location>
        <position position="525"/>
    </location>
    <ligand>
        <name>[4Fe-4S] cluster</name>
        <dbReference type="ChEBI" id="CHEBI:49883"/>
        <label>1</label>
    </ligand>
</feature>
<evidence type="ECO:0000255" key="1">
    <source>
        <dbReference type="PROSITE-ProRule" id="PRU00711"/>
    </source>
</evidence>
<evidence type="ECO:0000269" key="2">
    <source>
    </source>
</evidence>
<evidence type="ECO:0000303" key="3">
    <source>
    </source>
</evidence>
<evidence type="ECO:0000305" key="4"/>
<proteinExistence type="evidence at protein level"/>
<gene>
    <name evidence="3" type="primary">ramA</name>
</gene>
<comment type="function">
    <text evidence="2">Reductase required for the activation of corrinoid-dependent methylamine methyltransferase reactions during methanogenesis (PubMed:19043046). Mediates the ATP-dependent reduction of corrinoid proteins from the inactive cobalt(II) state to the active cobalt(I) state (PubMed:19043046). Acts on the corrinoid proteins involved in methanogenesis from monomethylamine (MMA), dimethylamine (DMA) and trimethylamine (TMA), namely MtmC, MtbC and MttC, respectively (PubMed:19043046).</text>
</comment>
<comment type="catalytic activity">
    <reaction evidence="2">
        <text>2 Co(II)-[methylamine-specific corrinoid protein] + AH2 + ATP + H2O = 2 Co(I)-[methylamine-specific corrinoid protein] + A + ADP + phosphate + 3 H(+)</text>
        <dbReference type="Rhea" id="RHEA:65816"/>
        <dbReference type="Rhea" id="RHEA-COMP:11121"/>
        <dbReference type="Rhea" id="RHEA-COMP:16918"/>
        <dbReference type="ChEBI" id="CHEBI:13193"/>
        <dbReference type="ChEBI" id="CHEBI:15377"/>
        <dbReference type="ChEBI" id="CHEBI:15378"/>
        <dbReference type="ChEBI" id="CHEBI:17499"/>
        <dbReference type="ChEBI" id="CHEBI:30616"/>
        <dbReference type="ChEBI" id="CHEBI:43474"/>
        <dbReference type="ChEBI" id="CHEBI:48828"/>
        <dbReference type="ChEBI" id="CHEBI:85033"/>
        <dbReference type="ChEBI" id="CHEBI:456216"/>
        <dbReference type="EC" id="1.16.99.1"/>
    </reaction>
    <physiologicalReaction direction="left-to-right" evidence="2">
        <dbReference type="Rhea" id="RHEA:65817"/>
    </physiologicalReaction>
</comment>
<comment type="catalytic activity">
    <reaction evidence="2">
        <text>2 Co(II)-[dimethylamine-specific corrinoid protein] + AH2 + ATP + H2O = 2 Co(I)-[dimethylamine-specific corrinoid protein] + A + ADP + phosphate + 3 H(+)</text>
        <dbReference type="Rhea" id="RHEA:65832"/>
        <dbReference type="Rhea" id="RHEA-COMP:11123"/>
        <dbReference type="Rhea" id="RHEA-COMP:16919"/>
        <dbReference type="ChEBI" id="CHEBI:13193"/>
        <dbReference type="ChEBI" id="CHEBI:15377"/>
        <dbReference type="ChEBI" id="CHEBI:15378"/>
        <dbReference type="ChEBI" id="CHEBI:17499"/>
        <dbReference type="ChEBI" id="CHEBI:30616"/>
        <dbReference type="ChEBI" id="CHEBI:43474"/>
        <dbReference type="ChEBI" id="CHEBI:48828"/>
        <dbReference type="ChEBI" id="CHEBI:85033"/>
        <dbReference type="ChEBI" id="CHEBI:456216"/>
        <dbReference type="EC" id="1.16.99.1"/>
    </reaction>
    <physiologicalReaction direction="left-to-right" evidence="2">
        <dbReference type="Rhea" id="RHEA:65833"/>
    </physiologicalReaction>
</comment>
<comment type="catalytic activity">
    <reaction evidence="2">
        <text>2 Co(II)-[trimethylamine-specific corrinoid protein] + AH2 + ATP + H2O = 2 Co(I)-[trimethylamine-specific corrinoid protein] + A + ADP + phosphate + 3 H(+)</text>
        <dbReference type="Rhea" id="RHEA:65836"/>
        <dbReference type="Rhea" id="RHEA-COMP:11124"/>
        <dbReference type="Rhea" id="RHEA-COMP:16920"/>
        <dbReference type="ChEBI" id="CHEBI:13193"/>
        <dbReference type="ChEBI" id="CHEBI:15377"/>
        <dbReference type="ChEBI" id="CHEBI:15378"/>
        <dbReference type="ChEBI" id="CHEBI:17499"/>
        <dbReference type="ChEBI" id="CHEBI:30616"/>
        <dbReference type="ChEBI" id="CHEBI:43474"/>
        <dbReference type="ChEBI" id="CHEBI:48828"/>
        <dbReference type="ChEBI" id="CHEBI:85033"/>
        <dbReference type="ChEBI" id="CHEBI:456216"/>
        <dbReference type="EC" id="1.16.99.1"/>
    </reaction>
    <physiologicalReaction direction="left-to-right" evidence="2">
        <dbReference type="Rhea" id="RHEA:65837"/>
    </physiologicalReaction>
</comment>
<comment type="cofactor">
    <cofactor evidence="1 2">
        <name>[4Fe-4S] cluster</name>
        <dbReference type="ChEBI" id="CHEBI:49883"/>
    </cofactor>
    <text evidence="1">Binds 2 [4Fe-4S] clusters.</text>
</comment>
<comment type="pathway">
    <text evidence="2">One-carbon metabolism; methanogenesis from methylamine.</text>
</comment>
<comment type="pathway">
    <text evidence="2">One-carbon metabolism; methanogenesis from dimethylamine.</text>
</comment>
<comment type="pathway">
    <text evidence="2">One-carbon metabolism; methanogenesis from trimethylamine.</text>
</comment>
<comment type="subunit">
    <text evidence="2">Monomer.</text>
</comment>
<organism>
    <name type="scientific">Methanosarcina barkeri</name>
    <dbReference type="NCBI Taxonomy" id="2208"/>
    <lineage>
        <taxon>Archaea</taxon>
        <taxon>Methanobacteriati</taxon>
        <taxon>Methanobacteriota</taxon>
        <taxon>Stenosarchaea group</taxon>
        <taxon>Methanomicrobia</taxon>
        <taxon>Methanosarcinales</taxon>
        <taxon>Methanosarcinaceae</taxon>
        <taxon>Methanosarcina</taxon>
    </lineage>
</organism>
<keyword id="KW-0004">4Fe-4S</keyword>
<keyword id="KW-0903">Direct protein sequencing</keyword>
<keyword id="KW-0408">Iron</keyword>
<keyword id="KW-0411">Iron-sulfur</keyword>
<keyword id="KW-0479">Metal-binding</keyword>
<keyword id="KW-0484">Methanogenesis</keyword>
<keyword id="KW-0560">Oxidoreductase</keyword>
<protein>
    <recommendedName>
        <fullName evidence="4">[Co(II) methylated amine-specific corrinoid protein] reductase</fullName>
        <ecNumber evidence="2">1.16.99.1</ecNumber>
    </recommendedName>
    <alternativeName>
        <fullName evidence="4">Corrinoid activation enzyme RamA</fullName>
    </alternativeName>
</protein>
<name>RAMA_METBA</name>
<accession>B8Y445</accession>